<comment type="catalytic activity">
    <reaction evidence="1">
        <text>CMP + ATP = CDP + ADP</text>
        <dbReference type="Rhea" id="RHEA:11600"/>
        <dbReference type="ChEBI" id="CHEBI:30616"/>
        <dbReference type="ChEBI" id="CHEBI:58069"/>
        <dbReference type="ChEBI" id="CHEBI:60377"/>
        <dbReference type="ChEBI" id="CHEBI:456216"/>
        <dbReference type="EC" id="2.7.4.25"/>
    </reaction>
</comment>
<comment type="catalytic activity">
    <reaction evidence="1">
        <text>dCMP + ATP = dCDP + ADP</text>
        <dbReference type="Rhea" id="RHEA:25094"/>
        <dbReference type="ChEBI" id="CHEBI:30616"/>
        <dbReference type="ChEBI" id="CHEBI:57566"/>
        <dbReference type="ChEBI" id="CHEBI:58593"/>
        <dbReference type="ChEBI" id="CHEBI:456216"/>
        <dbReference type="EC" id="2.7.4.25"/>
    </reaction>
</comment>
<comment type="subcellular location">
    <subcellularLocation>
        <location evidence="1">Cytoplasm</location>
    </subcellularLocation>
</comment>
<comment type="similarity">
    <text evidence="1">Belongs to the cytidylate kinase family. Type 1 subfamily.</text>
</comment>
<name>KCY_SHEFN</name>
<organism>
    <name type="scientific">Shewanella frigidimarina (strain NCIMB 400)</name>
    <dbReference type="NCBI Taxonomy" id="318167"/>
    <lineage>
        <taxon>Bacteria</taxon>
        <taxon>Pseudomonadati</taxon>
        <taxon>Pseudomonadota</taxon>
        <taxon>Gammaproteobacteria</taxon>
        <taxon>Alteromonadales</taxon>
        <taxon>Shewanellaceae</taxon>
        <taxon>Shewanella</taxon>
    </lineage>
</organism>
<proteinExistence type="inferred from homology"/>
<dbReference type="EC" id="2.7.4.25" evidence="1"/>
<dbReference type="EMBL" id="CP000447">
    <property type="protein sequence ID" value="ABI71970.1"/>
    <property type="molecule type" value="Genomic_DNA"/>
</dbReference>
<dbReference type="RefSeq" id="WP_011637580.1">
    <property type="nucleotide sequence ID" value="NC_008345.1"/>
</dbReference>
<dbReference type="SMR" id="Q081U5"/>
<dbReference type="STRING" id="318167.Sfri_2124"/>
<dbReference type="KEGG" id="sfr:Sfri_2124"/>
<dbReference type="eggNOG" id="COG0283">
    <property type="taxonomic scope" value="Bacteria"/>
</dbReference>
<dbReference type="HOGENOM" id="CLU_079959_2_0_6"/>
<dbReference type="OrthoDB" id="9807434at2"/>
<dbReference type="Proteomes" id="UP000000684">
    <property type="component" value="Chromosome"/>
</dbReference>
<dbReference type="GO" id="GO:0005829">
    <property type="term" value="C:cytosol"/>
    <property type="evidence" value="ECO:0007669"/>
    <property type="project" value="TreeGrafter"/>
</dbReference>
<dbReference type="GO" id="GO:0005524">
    <property type="term" value="F:ATP binding"/>
    <property type="evidence" value="ECO:0007669"/>
    <property type="project" value="UniProtKB-UniRule"/>
</dbReference>
<dbReference type="GO" id="GO:0036430">
    <property type="term" value="F:CMP kinase activity"/>
    <property type="evidence" value="ECO:0007669"/>
    <property type="project" value="RHEA"/>
</dbReference>
<dbReference type="GO" id="GO:0036431">
    <property type="term" value="F:dCMP kinase activity"/>
    <property type="evidence" value="ECO:0007669"/>
    <property type="project" value="RHEA"/>
</dbReference>
<dbReference type="GO" id="GO:0015949">
    <property type="term" value="P:nucleobase-containing small molecule interconversion"/>
    <property type="evidence" value="ECO:0007669"/>
    <property type="project" value="TreeGrafter"/>
</dbReference>
<dbReference type="GO" id="GO:0006220">
    <property type="term" value="P:pyrimidine nucleotide metabolic process"/>
    <property type="evidence" value="ECO:0007669"/>
    <property type="project" value="UniProtKB-UniRule"/>
</dbReference>
<dbReference type="CDD" id="cd02020">
    <property type="entry name" value="CMPK"/>
    <property type="match status" value="1"/>
</dbReference>
<dbReference type="FunFam" id="3.40.50.300:FF:000262">
    <property type="entry name" value="Cytidylate kinase"/>
    <property type="match status" value="1"/>
</dbReference>
<dbReference type="Gene3D" id="3.40.50.300">
    <property type="entry name" value="P-loop containing nucleotide triphosphate hydrolases"/>
    <property type="match status" value="1"/>
</dbReference>
<dbReference type="HAMAP" id="MF_00238">
    <property type="entry name" value="Cytidyl_kinase_type1"/>
    <property type="match status" value="1"/>
</dbReference>
<dbReference type="InterPro" id="IPR003136">
    <property type="entry name" value="Cytidylate_kin"/>
</dbReference>
<dbReference type="InterPro" id="IPR011994">
    <property type="entry name" value="Cytidylate_kinase_dom"/>
</dbReference>
<dbReference type="InterPro" id="IPR027417">
    <property type="entry name" value="P-loop_NTPase"/>
</dbReference>
<dbReference type="NCBIfam" id="TIGR00017">
    <property type="entry name" value="cmk"/>
    <property type="match status" value="1"/>
</dbReference>
<dbReference type="PANTHER" id="PTHR21299:SF2">
    <property type="entry name" value="CYTIDYLATE KINASE"/>
    <property type="match status" value="1"/>
</dbReference>
<dbReference type="PANTHER" id="PTHR21299">
    <property type="entry name" value="CYTIDYLATE KINASE/PANTOATE-BETA-ALANINE LIGASE"/>
    <property type="match status" value="1"/>
</dbReference>
<dbReference type="Pfam" id="PF02224">
    <property type="entry name" value="Cytidylate_kin"/>
    <property type="match status" value="1"/>
</dbReference>
<dbReference type="SUPFAM" id="SSF52540">
    <property type="entry name" value="P-loop containing nucleoside triphosphate hydrolases"/>
    <property type="match status" value="1"/>
</dbReference>
<feature type="chain" id="PRO_1000048275" description="Cytidylate kinase">
    <location>
        <begin position="1"/>
        <end position="229"/>
    </location>
</feature>
<feature type="binding site" evidence="1">
    <location>
        <begin position="12"/>
        <end position="20"/>
    </location>
    <ligand>
        <name>ATP</name>
        <dbReference type="ChEBI" id="CHEBI:30616"/>
    </ligand>
</feature>
<gene>
    <name evidence="1" type="primary">cmk</name>
    <name type="ordered locus">Sfri_2124</name>
</gene>
<keyword id="KW-0067">ATP-binding</keyword>
<keyword id="KW-0963">Cytoplasm</keyword>
<keyword id="KW-0418">Kinase</keyword>
<keyword id="KW-0547">Nucleotide-binding</keyword>
<keyword id="KW-1185">Reference proteome</keyword>
<keyword id="KW-0808">Transferase</keyword>
<accession>Q081U5</accession>
<sequence length="229" mass="24805">MSERSPVITVDGPSGAGKGTICQLLAQHLGWHLLDSGAIYRVLALAAIHHDVELENEEALTLLAAHLDVQFLTGTEADAIKVILEGEDVTTTIRTQECSNAASKVAALPRVREALLRRQRAFSAAPGLVADGRDMGTVVFSKAPVKIFLTASAEERAQRRYNQLQDKGFDVKIDRLLAEIIERDDRDTNRAASPLVPADDALVIDTSGIGIEDVLKQVLEYVGQKITVT</sequence>
<evidence type="ECO:0000255" key="1">
    <source>
        <dbReference type="HAMAP-Rule" id="MF_00238"/>
    </source>
</evidence>
<reference key="1">
    <citation type="submission" date="2006-08" db="EMBL/GenBank/DDBJ databases">
        <title>Complete sequence of Shewanella frigidimarina NCIMB 400.</title>
        <authorList>
            <consortium name="US DOE Joint Genome Institute"/>
            <person name="Copeland A."/>
            <person name="Lucas S."/>
            <person name="Lapidus A."/>
            <person name="Barry K."/>
            <person name="Detter J.C."/>
            <person name="Glavina del Rio T."/>
            <person name="Hammon N."/>
            <person name="Israni S."/>
            <person name="Dalin E."/>
            <person name="Tice H."/>
            <person name="Pitluck S."/>
            <person name="Fredrickson J.K."/>
            <person name="Kolker E."/>
            <person name="McCuel L.A."/>
            <person name="DiChristina T."/>
            <person name="Nealson K.H."/>
            <person name="Newman D."/>
            <person name="Tiedje J.M."/>
            <person name="Zhou J."/>
            <person name="Romine M.F."/>
            <person name="Culley D.E."/>
            <person name="Serres M."/>
            <person name="Chertkov O."/>
            <person name="Brettin T."/>
            <person name="Bruce D."/>
            <person name="Han C."/>
            <person name="Tapia R."/>
            <person name="Gilna P."/>
            <person name="Schmutz J."/>
            <person name="Larimer F."/>
            <person name="Land M."/>
            <person name="Hauser L."/>
            <person name="Kyrpides N."/>
            <person name="Mikhailova N."/>
            <person name="Richardson P."/>
        </authorList>
    </citation>
    <scope>NUCLEOTIDE SEQUENCE [LARGE SCALE GENOMIC DNA]</scope>
    <source>
        <strain>NCIMB 400</strain>
    </source>
</reference>
<protein>
    <recommendedName>
        <fullName evidence="1">Cytidylate kinase</fullName>
        <shortName evidence="1">CK</shortName>
        <ecNumber evidence="1">2.7.4.25</ecNumber>
    </recommendedName>
    <alternativeName>
        <fullName evidence="1">Cytidine monophosphate kinase</fullName>
        <shortName evidence="1">CMP kinase</shortName>
    </alternativeName>
</protein>